<sequence>MLIPWQDLSPETLENLIESFVLREGTDYGEHERTLEQKVADVKRQLQCGEAVLVWSELHETVNIMPRSQFRE</sequence>
<protein>
    <recommendedName>
        <fullName evidence="1">UPF0270 protein YheU</fullName>
    </recommendedName>
</protein>
<name>YHEU_ECOLC</name>
<feature type="chain" id="PRO_1000083111" description="UPF0270 protein YheU">
    <location>
        <begin position="1"/>
        <end position="72"/>
    </location>
</feature>
<evidence type="ECO:0000255" key="1">
    <source>
        <dbReference type="HAMAP-Rule" id="MF_00690"/>
    </source>
</evidence>
<gene>
    <name evidence="1" type="primary">yheU</name>
    <name type="ordered locus">EcolC_0358</name>
</gene>
<organism>
    <name type="scientific">Escherichia coli (strain ATCC 8739 / DSM 1576 / NBRC 3972 / NCIMB 8545 / WDCM 00012 / Crooks)</name>
    <dbReference type="NCBI Taxonomy" id="481805"/>
    <lineage>
        <taxon>Bacteria</taxon>
        <taxon>Pseudomonadati</taxon>
        <taxon>Pseudomonadota</taxon>
        <taxon>Gammaproteobacteria</taxon>
        <taxon>Enterobacterales</taxon>
        <taxon>Enterobacteriaceae</taxon>
        <taxon>Escherichia</taxon>
    </lineage>
</organism>
<comment type="similarity">
    <text evidence="1">Belongs to the UPF0270 family.</text>
</comment>
<reference key="1">
    <citation type="submission" date="2008-02" db="EMBL/GenBank/DDBJ databases">
        <title>Complete sequence of Escherichia coli C str. ATCC 8739.</title>
        <authorList>
            <person name="Copeland A."/>
            <person name="Lucas S."/>
            <person name="Lapidus A."/>
            <person name="Glavina del Rio T."/>
            <person name="Dalin E."/>
            <person name="Tice H."/>
            <person name="Bruce D."/>
            <person name="Goodwin L."/>
            <person name="Pitluck S."/>
            <person name="Kiss H."/>
            <person name="Brettin T."/>
            <person name="Detter J.C."/>
            <person name="Han C."/>
            <person name="Kuske C.R."/>
            <person name="Schmutz J."/>
            <person name="Larimer F."/>
            <person name="Land M."/>
            <person name="Hauser L."/>
            <person name="Kyrpides N."/>
            <person name="Mikhailova N."/>
            <person name="Ingram L."/>
            <person name="Richardson P."/>
        </authorList>
    </citation>
    <scope>NUCLEOTIDE SEQUENCE [LARGE SCALE GENOMIC DNA]</scope>
    <source>
        <strain>ATCC 8739 / DSM 1576 / NBRC 3972 / NCIMB 8545 / WDCM 00012 / Crooks</strain>
    </source>
</reference>
<accession>B1IPB0</accession>
<proteinExistence type="inferred from homology"/>
<dbReference type="EMBL" id="CP000946">
    <property type="protein sequence ID" value="ACA76036.1"/>
    <property type="molecule type" value="Genomic_DNA"/>
</dbReference>
<dbReference type="RefSeq" id="WP_000907085.1">
    <property type="nucleotide sequence ID" value="NZ_MTFT01000001.1"/>
</dbReference>
<dbReference type="SMR" id="B1IPB0"/>
<dbReference type="KEGG" id="ecl:EcolC_0358"/>
<dbReference type="HOGENOM" id="CLU_186759_1_0_6"/>
<dbReference type="Gene3D" id="1.10.10.610">
    <property type="entry name" value="YehU-like"/>
    <property type="match status" value="1"/>
</dbReference>
<dbReference type="HAMAP" id="MF_00690">
    <property type="entry name" value="UPF0270"/>
    <property type="match status" value="1"/>
</dbReference>
<dbReference type="InterPro" id="IPR010648">
    <property type="entry name" value="UPF0270"/>
</dbReference>
<dbReference type="InterPro" id="IPR036685">
    <property type="entry name" value="YehU-like_sf"/>
</dbReference>
<dbReference type="NCBIfam" id="NF003438">
    <property type="entry name" value="PRK04966.1"/>
    <property type="match status" value="1"/>
</dbReference>
<dbReference type="Pfam" id="PF06794">
    <property type="entry name" value="UPF0270"/>
    <property type="match status" value="1"/>
</dbReference>
<dbReference type="PIRSF" id="PIRSF006169">
    <property type="entry name" value="UCP006169"/>
    <property type="match status" value="1"/>
</dbReference>
<dbReference type="SUPFAM" id="SSF118001">
    <property type="entry name" value="YehU-like"/>
    <property type="match status" value="1"/>
</dbReference>